<proteinExistence type="inferred from homology"/>
<sequence length="137" mass="14856">MPPKAADKKPANKAPATASKAPEKKDAGKKTAASGEKKKRTKARKETYSSYIYKVLKQVHPDTGISNRAMSILNSFVNDIFERVATEASKLAAYNKKSTISSREIQTSVRLILPGELAKHAVSEGTKAVTKYSSSTK</sequence>
<gene>
    <name type="primary">HTB1</name>
    <name type="ORF">Pa5D0007</name>
</gene>
<evidence type="ECO:0000250" key="1"/>
<evidence type="ECO:0000256" key="2">
    <source>
        <dbReference type="SAM" id="MobiDB-lite"/>
    </source>
</evidence>
<evidence type="ECO:0000305" key="3"/>
<dbReference type="EMBL" id="BX088700">
    <property type="protein sequence ID" value="CAD60694.1"/>
    <property type="molecule type" value="Genomic_DNA"/>
</dbReference>
<dbReference type="SMR" id="Q875B7"/>
<dbReference type="VEuPathDB" id="FungiDB:PODANS_5_5410"/>
<dbReference type="GO" id="GO:0000786">
    <property type="term" value="C:nucleosome"/>
    <property type="evidence" value="ECO:0007669"/>
    <property type="project" value="UniProtKB-KW"/>
</dbReference>
<dbReference type="GO" id="GO:0005634">
    <property type="term" value="C:nucleus"/>
    <property type="evidence" value="ECO:0007669"/>
    <property type="project" value="UniProtKB-SubCell"/>
</dbReference>
<dbReference type="GO" id="GO:0003677">
    <property type="term" value="F:DNA binding"/>
    <property type="evidence" value="ECO:0007669"/>
    <property type="project" value="UniProtKB-KW"/>
</dbReference>
<dbReference type="GO" id="GO:0046982">
    <property type="term" value="F:protein heterodimerization activity"/>
    <property type="evidence" value="ECO:0007669"/>
    <property type="project" value="InterPro"/>
</dbReference>
<dbReference type="GO" id="GO:0030527">
    <property type="term" value="F:structural constituent of chromatin"/>
    <property type="evidence" value="ECO:0007669"/>
    <property type="project" value="InterPro"/>
</dbReference>
<dbReference type="CDD" id="cd22910">
    <property type="entry name" value="HFD_H2B"/>
    <property type="match status" value="1"/>
</dbReference>
<dbReference type="FunFam" id="1.10.20.10:FF:000014">
    <property type="entry name" value="Histone H2B"/>
    <property type="match status" value="1"/>
</dbReference>
<dbReference type="Gene3D" id="1.10.20.10">
    <property type="entry name" value="Histone, subunit A"/>
    <property type="match status" value="1"/>
</dbReference>
<dbReference type="InterPro" id="IPR009072">
    <property type="entry name" value="Histone-fold"/>
</dbReference>
<dbReference type="InterPro" id="IPR007125">
    <property type="entry name" value="Histone_H2A/H2B/H3"/>
</dbReference>
<dbReference type="InterPro" id="IPR000558">
    <property type="entry name" value="Histone_H2B"/>
</dbReference>
<dbReference type="InterPro" id="IPR055333">
    <property type="entry name" value="HISTONE_H2B_site"/>
</dbReference>
<dbReference type="PANTHER" id="PTHR23428">
    <property type="entry name" value="HISTONE H2B"/>
    <property type="match status" value="1"/>
</dbReference>
<dbReference type="Pfam" id="PF00125">
    <property type="entry name" value="Histone"/>
    <property type="match status" value="1"/>
</dbReference>
<dbReference type="PRINTS" id="PR00621">
    <property type="entry name" value="HISTONEH2B"/>
</dbReference>
<dbReference type="SMART" id="SM00427">
    <property type="entry name" value="H2B"/>
    <property type="match status" value="1"/>
</dbReference>
<dbReference type="SUPFAM" id="SSF47113">
    <property type="entry name" value="Histone-fold"/>
    <property type="match status" value="1"/>
</dbReference>
<dbReference type="PROSITE" id="PS00357">
    <property type="entry name" value="HISTONE_H2B"/>
    <property type="match status" value="1"/>
</dbReference>
<keyword id="KW-0007">Acetylation</keyword>
<keyword id="KW-0158">Chromosome</keyword>
<keyword id="KW-0238">DNA-binding</keyword>
<keyword id="KW-1017">Isopeptide bond</keyword>
<keyword id="KW-0544">Nucleosome core</keyword>
<keyword id="KW-0539">Nucleus</keyword>
<keyword id="KW-0832">Ubl conjugation</keyword>
<reference key="1">
    <citation type="journal article" date="2003" name="Fungal Genet. Biol.">
        <title>Characterization of the genomic organization of the region bordering the centromere of chromosome V of Podospora anserina by direct sequencing.</title>
        <authorList>
            <person name="Silar P."/>
            <person name="Barreau C."/>
            <person name="Debuchy R."/>
            <person name="Kicka S."/>
            <person name="Turcq B."/>
            <person name="Sainsard-Chanet A."/>
            <person name="Sellem C.H."/>
            <person name="Billault A."/>
            <person name="Cattolico L."/>
            <person name="Duprat S."/>
            <person name="Weissenbach J."/>
        </authorList>
    </citation>
    <scope>NUCLEOTIDE SEQUENCE [LARGE SCALE GENOMIC DNA]</scope>
    <source>
        <strain>s</strain>
    </source>
</reference>
<protein>
    <recommendedName>
        <fullName>Histone H2B</fullName>
    </recommendedName>
</protein>
<organism>
    <name type="scientific">Podospora anserina</name>
    <name type="common">Pleurage anserina</name>
    <dbReference type="NCBI Taxonomy" id="2587412"/>
    <lineage>
        <taxon>Eukaryota</taxon>
        <taxon>Fungi</taxon>
        <taxon>Dikarya</taxon>
        <taxon>Ascomycota</taxon>
        <taxon>Pezizomycotina</taxon>
        <taxon>Sordariomycetes</taxon>
        <taxon>Sordariomycetidae</taxon>
        <taxon>Sordariales</taxon>
        <taxon>Podosporaceae</taxon>
        <taxon>Podospora</taxon>
    </lineage>
</organism>
<feature type="initiator methionine" description="Removed" evidence="1">
    <location>
        <position position="1"/>
    </location>
</feature>
<feature type="chain" id="PRO_0000245299" description="Histone H2B">
    <location>
        <begin position="2"/>
        <end position="137"/>
    </location>
</feature>
<feature type="region of interest" description="Disordered" evidence="2">
    <location>
        <begin position="1"/>
        <end position="45"/>
    </location>
</feature>
<feature type="compositionally biased region" description="Basic and acidic residues" evidence="2">
    <location>
        <begin position="1"/>
        <end position="10"/>
    </location>
</feature>
<feature type="modified residue" description="N6-acetyllysine; alternate" evidence="1">
    <location>
        <position position="8"/>
    </location>
</feature>
<feature type="modified residue" description="N6-acetyllysine; alternate" evidence="1">
    <location>
        <position position="9"/>
    </location>
</feature>
<feature type="modified residue" description="N6-acetyllysine" evidence="1">
    <location>
        <position position="13"/>
    </location>
</feature>
<feature type="modified residue" description="N6-acetyllysine; alternate" evidence="1">
    <location>
        <position position="24"/>
    </location>
</feature>
<feature type="cross-link" description="Glycyl lysine isopeptide (Lys-Gly) (interchain with G-Cter in SUMO); alternate" evidence="1">
    <location>
        <position position="8"/>
    </location>
</feature>
<feature type="cross-link" description="Glycyl lysine isopeptide (Lys-Gly) (interchain with G-Cter in SUMO); alternate" evidence="1">
    <location>
        <position position="9"/>
    </location>
</feature>
<feature type="cross-link" description="Glycyl lysine isopeptide (Lys-Gly) (interchain with G-Cter in SUMO); alternate" evidence="1">
    <location>
        <position position="24"/>
    </location>
</feature>
<feature type="cross-link" description="Glycyl lysine isopeptide (Lys-Gly) (interchain with G-Cter in SUMO)" evidence="1">
    <location>
        <position position="25"/>
    </location>
</feature>
<feature type="cross-link" description="Glycyl lysine isopeptide (Lys-Gly) (interchain with G-Cter in ubiquitin)" evidence="1">
    <location>
        <position position="131"/>
    </location>
</feature>
<name>H2B_PODAS</name>
<comment type="function">
    <text>Core component of nucleosome. Nucleosomes wrap and compact DNA into chromatin, limiting DNA accessibility to the cellular machineries which require DNA as a template. Histones thereby play a central role in transcription regulation, DNA repair, DNA replication and chromosomal stability. DNA accessibility is regulated via a complex set of post-translational modifications of histones, also called histone code, and nucleosome remodeling.</text>
</comment>
<comment type="subunit">
    <text>The nucleosome is a histone octamer containing two molecules each of H2A, H2B, H3 and H4 assembled in one H3-H4 heterotetramer and two H2A-H2B heterodimers. The octamer wraps approximately 147 bp of DNA.</text>
</comment>
<comment type="subcellular location">
    <subcellularLocation>
        <location evidence="1">Nucleus</location>
    </subcellularLocation>
    <subcellularLocation>
        <location evidence="1">Chromosome</location>
    </subcellularLocation>
</comment>
<comment type="PTM">
    <text evidence="1">Monoubiquitinated to form H2BK123ub1. H2BK123ub1 gives a specific tag for epigenetic transcriptional activation and is also prerequisite for H3K4me and H3K79me formation. H2BK123ub1 also modulates the formation of double-strand breaks during meiosis and is a prerequisite for DNA-damage checkpoint activation (By similarity).</text>
</comment>
<comment type="PTM">
    <text evidence="1">Acetylated by GCN5 to form H2BK11ac and H2BK16ac. H2BK16ac can also be formed by ESA1. Acetylation of N-terminal lysines and particularly formation of H2BK11acK16ac has a positive effect on transcription (By similarity).</text>
</comment>
<comment type="PTM">
    <text evidence="1">Sumoylation to form H2BK6su or H2BK7su, and probably also H2BK16su or H2BK17su, occurs preferentially near the telomeres and represses gene transcription.</text>
</comment>
<comment type="similarity">
    <text evidence="3">Belongs to the histone H2B family.</text>
</comment>
<comment type="caution">
    <text evidence="3">To ensure consistency between histone entries, we follow the 'Brno' nomenclature for histone modifications, with positions referring to those used in the literature for the 'closest' model organism. Due to slight variations in histone sequences between organisms and to the presence of initiator methionine in UniProtKB/Swiss-Prot sequences, the actual positions of modified amino acids in the sequence generally differ. In this entry the following conventions are used: H2BK6ac = acetylated Lys-8; H2BK6su = sumoylated Lys-8; H2BK7ac = acetylated Lys-9; H2BK7su = sumoylated Lys-9; H2BK11ac = acetylated Lys-13; H2BK16ac = acetylated Lys-24; H2BK16su = sumoylated Lys-24; H2BK17su = sumoylated Lys-25; H2BK123ub1 = monoubiquitinated Lys-131.</text>
</comment>
<accession>Q875B7</accession>